<evidence type="ECO:0000250" key="1"/>
<evidence type="ECO:0000255" key="2">
    <source>
        <dbReference type="HAMAP-Rule" id="MF_00047"/>
    </source>
</evidence>
<comment type="function">
    <text evidence="2">Cell wall formation.</text>
</comment>
<comment type="catalytic activity">
    <reaction evidence="2">
        <text>2 D-alanine + ATP = D-alanyl-D-alanine + ADP + phosphate + H(+)</text>
        <dbReference type="Rhea" id="RHEA:11224"/>
        <dbReference type="ChEBI" id="CHEBI:15378"/>
        <dbReference type="ChEBI" id="CHEBI:30616"/>
        <dbReference type="ChEBI" id="CHEBI:43474"/>
        <dbReference type="ChEBI" id="CHEBI:57416"/>
        <dbReference type="ChEBI" id="CHEBI:57822"/>
        <dbReference type="ChEBI" id="CHEBI:456216"/>
        <dbReference type="EC" id="6.3.2.4"/>
    </reaction>
</comment>
<comment type="cofactor">
    <cofactor evidence="1">
        <name>Mg(2+)</name>
        <dbReference type="ChEBI" id="CHEBI:18420"/>
    </cofactor>
    <cofactor evidence="1">
        <name>Mn(2+)</name>
        <dbReference type="ChEBI" id="CHEBI:29035"/>
    </cofactor>
    <text evidence="1">Binds 2 magnesium or manganese ions per subunit.</text>
</comment>
<comment type="pathway">
    <text evidence="2">Cell wall biogenesis; peptidoglycan biosynthesis.</text>
</comment>
<comment type="subcellular location">
    <subcellularLocation>
        <location evidence="2">Cytoplasm</location>
    </subcellularLocation>
</comment>
<comment type="similarity">
    <text evidence="2">Belongs to the D-alanine--D-alanine ligase family.</text>
</comment>
<protein>
    <recommendedName>
        <fullName evidence="2">D-alanine--D-alanine ligase</fullName>
        <ecNumber evidence="2">6.3.2.4</ecNumber>
    </recommendedName>
    <alternativeName>
        <fullName evidence="2">D-Ala-D-Ala ligase</fullName>
    </alternativeName>
    <alternativeName>
        <fullName evidence="2">D-alanylalanine synthetase</fullName>
    </alternativeName>
</protein>
<organism>
    <name type="scientific">Clostridium botulinum (strain Hall / ATCC 3502 / NCTC 13319 / Type A)</name>
    <dbReference type="NCBI Taxonomy" id="441771"/>
    <lineage>
        <taxon>Bacteria</taxon>
        <taxon>Bacillati</taxon>
        <taxon>Bacillota</taxon>
        <taxon>Clostridia</taxon>
        <taxon>Eubacteriales</taxon>
        <taxon>Clostridiaceae</taxon>
        <taxon>Clostridium</taxon>
    </lineage>
</organism>
<dbReference type="EC" id="6.3.2.4" evidence="2"/>
<dbReference type="EMBL" id="CP000727">
    <property type="protein sequence ID" value="ABS38753.1"/>
    <property type="molecule type" value="Genomic_DNA"/>
</dbReference>
<dbReference type="EMBL" id="AM412317">
    <property type="protein sequence ID" value="CAL82005.1"/>
    <property type="molecule type" value="Genomic_DNA"/>
</dbReference>
<dbReference type="RefSeq" id="WP_003356163.1">
    <property type="nucleotide sequence ID" value="NC_009698.1"/>
</dbReference>
<dbReference type="RefSeq" id="YP_001252996.1">
    <property type="nucleotide sequence ID" value="NC_009495.1"/>
</dbReference>
<dbReference type="RefSeq" id="YP_001386411.1">
    <property type="nucleotide sequence ID" value="NC_009698.1"/>
</dbReference>
<dbReference type="SMR" id="A5HYZ6"/>
<dbReference type="GeneID" id="5184707"/>
<dbReference type="KEGG" id="cbh:CLC_0526"/>
<dbReference type="KEGG" id="cbo:CBO0452"/>
<dbReference type="PATRIC" id="fig|413999.7.peg.455"/>
<dbReference type="HOGENOM" id="CLU_039268_1_1_9"/>
<dbReference type="UniPathway" id="UPA00219"/>
<dbReference type="PRO" id="PR:A5HYZ6"/>
<dbReference type="Proteomes" id="UP000001986">
    <property type="component" value="Chromosome"/>
</dbReference>
<dbReference type="GO" id="GO:0005737">
    <property type="term" value="C:cytoplasm"/>
    <property type="evidence" value="ECO:0007669"/>
    <property type="project" value="UniProtKB-SubCell"/>
</dbReference>
<dbReference type="GO" id="GO:0005524">
    <property type="term" value="F:ATP binding"/>
    <property type="evidence" value="ECO:0007669"/>
    <property type="project" value="UniProtKB-KW"/>
</dbReference>
<dbReference type="GO" id="GO:0008716">
    <property type="term" value="F:D-alanine-D-alanine ligase activity"/>
    <property type="evidence" value="ECO:0000318"/>
    <property type="project" value="GO_Central"/>
</dbReference>
<dbReference type="GO" id="GO:0046872">
    <property type="term" value="F:metal ion binding"/>
    <property type="evidence" value="ECO:0007669"/>
    <property type="project" value="UniProtKB-KW"/>
</dbReference>
<dbReference type="GO" id="GO:0071555">
    <property type="term" value="P:cell wall organization"/>
    <property type="evidence" value="ECO:0007669"/>
    <property type="project" value="UniProtKB-KW"/>
</dbReference>
<dbReference type="GO" id="GO:0009252">
    <property type="term" value="P:peptidoglycan biosynthetic process"/>
    <property type="evidence" value="ECO:0007669"/>
    <property type="project" value="UniProtKB-UniRule"/>
</dbReference>
<dbReference type="GO" id="GO:0008360">
    <property type="term" value="P:regulation of cell shape"/>
    <property type="evidence" value="ECO:0007669"/>
    <property type="project" value="UniProtKB-KW"/>
</dbReference>
<dbReference type="FunFam" id="3.30.1490.20:FF:000035">
    <property type="entry name" value="D-alanine--D-alanine ligase"/>
    <property type="match status" value="1"/>
</dbReference>
<dbReference type="FunFam" id="3.30.470.20:FF:000074">
    <property type="entry name" value="D-alanine--D-alanine ligase"/>
    <property type="match status" value="1"/>
</dbReference>
<dbReference type="FunFam" id="3.40.50.20:FF:000031">
    <property type="entry name" value="D-alanine--D-alanine ligase"/>
    <property type="match status" value="1"/>
</dbReference>
<dbReference type="Gene3D" id="3.40.50.20">
    <property type="match status" value="1"/>
</dbReference>
<dbReference type="Gene3D" id="3.30.1490.20">
    <property type="entry name" value="ATP-grasp fold, A domain"/>
    <property type="match status" value="1"/>
</dbReference>
<dbReference type="Gene3D" id="3.30.470.20">
    <property type="entry name" value="ATP-grasp fold, B domain"/>
    <property type="match status" value="1"/>
</dbReference>
<dbReference type="HAMAP" id="MF_00047">
    <property type="entry name" value="Dala_Dala_lig"/>
    <property type="match status" value="1"/>
</dbReference>
<dbReference type="InterPro" id="IPR011761">
    <property type="entry name" value="ATP-grasp"/>
</dbReference>
<dbReference type="InterPro" id="IPR013815">
    <property type="entry name" value="ATP_grasp_subdomain_1"/>
</dbReference>
<dbReference type="InterPro" id="IPR000291">
    <property type="entry name" value="D-Ala_lig_Van_CS"/>
</dbReference>
<dbReference type="InterPro" id="IPR005905">
    <property type="entry name" value="D_ala_D_ala"/>
</dbReference>
<dbReference type="InterPro" id="IPR011095">
    <property type="entry name" value="Dala_Dala_lig_C"/>
</dbReference>
<dbReference type="InterPro" id="IPR011127">
    <property type="entry name" value="Dala_Dala_lig_N"/>
</dbReference>
<dbReference type="InterPro" id="IPR016185">
    <property type="entry name" value="PreATP-grasp_dom_sf"/>
</dbReference>
<dbReference type="NCBIfam" id="TIGR01205">
    <property type="entry name" value="D_ala_D_alaTIGR"/>
    <property type="match status" value="1"/>
</dbReference>
<dbReference type="NCBIfam" id="NF002378">
    <property type="entry name" value="PRK01372.1"/>
    <property type="match status" value="1"/>
</dbReference>
<dbReference type="PANTHER" id="PTHR23132">
    <property type="entry name" value="D-ALANINE--D-ALANINE LIGASE"/>
    <property type="match status" value="1"/>
</dbReference>
<dbReference type="PANTHER" id="PTHR23132:SF23">
    <property type="entry name" value="D-ALANINE--D-ALANINE LIGASE B"/>
    <property type="match status" value="1"/>
</dbReference>
<dbReference type="Pfam" id="PF07478">
    <property type="entry name" value="Dala_Dala_lig_C"/>
    <property type="match status" value="1"/>
</dbReference>
<dbReference type="Pfam" id="PF01820">
    <property type="entry name" value="Dala_Dala_lig_N"/>
    <property type="match status" value="1"/>
</dbReference>
<dbReference type="PIRSF" id="PIRSF039102">
    <property type="entry name" value="Ddl/VanB"/>
    <property type="match status" value="1"/>
</dbReference>
<dbReference type="SMART" id="SM01209">
    <property type="entry name" value="GARS_A"/>
    <property type="match status" value="1"/>
</dbReference>
<dbReference type="SUPFAM" id="SSF56059">
    <property type="entry name" value="Glutathione synthetase ATP-binding domain-like"/>
    <property type="match status" value="1"/>
</dbReference>
<dbReference type="SUPFAM" id="SSF52440">
    <property type="entry name" value="PreATP-grasp domain"/>
    <property type="match status" value="1"/>
</dbReference>
<dbReference type="PROSITE" id="PS50975">
    <property type="entry name" value="ATP_GRASP"/>
    <property type="match status" value="1"/>
</dbReference>
<dbReference type="PROSITE" id="PS00843">
    <property type="entry name" value="DALA_DALA_LIGASE_1"/>
    <property type="match status" value="1"/>
</dbReference>
<dbReference type="PROSITE" id="PS00844">
    <property type="entry name" value="DALA_DALA_LIGASE_2"/>
    <property type="match status" value="1"/>
</dbReference>
<name>DDL_CLOBH</name>
<accession>A5HYZ6</accession>
<accession>A7G0Z2</accession>
<gene>
    <name evidence="2" type="primary">ddl</name>
    <name type="ordered locus">CBO0452</name>
    <name type="ordered locus">CLC_0526</name>
</gene>
<reference key="1">
    <citation type="journal article" date="2007" name="Genome Res.">
        <title>Genome sequence of a proteolytic (Group I) Clostridium botulinum strain Hall A and comparative analysis of the clostridial genomes.</title>
        <authorList>
            <person name="Sebaihia M."/>
            <person name="Peck M.W."/>
            <person name="Minton N.P."/>
            <person name="Thomson N.R."/>
            <person name="Holden M.T.G."/>
            <person name="Mitchell W.J."/>
            <person name="Carter A.T."/>
            <person name="Bentley S.D."/>
            <person name="Mason D.R."/>
            <person name="Crossman L."/>
            <person name="Paul C.J."/>
            <person name="Ivens A."/>
            <person name="Wells-Bennik M.H.J."/>
            <person name="Davis I.J."/>
            <person name="Cerdeno-Tarraga A.M."/>
            <person name="Churcher C."/>
            <person name="Quail M.A."/>
            <person name="Chillingworth T."/>
            <person name="Feltwell T."/>
            <person name="Fraser A."/>
            <person name="Goodhead I."/>
            <person name="Hance Z."/>
            <person name="Jagels K."/>
            <person name="Larke N."/>
            <person name="Maddison M."/>
            <person name="Moule S."/>
            <person name="Mungall K."/>
            <person name="Norbertczak H."/>
            <person name="Rabbinowitsch E."/>
            <person name="Sanders M."/>
            <person name="Simmonds M."/>
            <person name="White B."/>
            <person name="Whithead S."/>
            <person name="Parkhill J."/>
        </authorList>
    </citation>
    <scope>NUCLEOTIDE SEQUENCE [LARGE SCALE GENOMIC DNA]</scope>
    <source>
        <strain>Hall / ATCC 3502 / NCTC 13319 / Type A</strain>
    </source>
</reference>
<reference key="2">
    <citation type="journal article" date="2007" name="PLoS ONE">
        <title>Analysis of the neurotoxin complex genes in Clostridium botulinum A1-A4 and B1 strains: BoNT/A3, /Ba4 and /B1 clusters are located within plasmids.</title>
        <authorList>
            <person name="Smith T.J."/>
            <person name="Hill K.K."/>
            <person name="Foley B.T."/>
            <person name="Detter J.C."/>
            <person name="Munk A.C."/>
            <person name="Bruce D.C."/>
            <person name="Doggett N.A."/>
            <person name="Smith L.A."/>
            <person name="Marks J.D."/>
            <person name="Xie G."/>
            <person name="Brettin T.S."/>
        </authorList>
    </citation>
    <scope>NUCLEOTIDE SEQUENCE [LARGE SCALE GENOMIC DNA]</scope>
    <source>
        <strain>Hall / ATCC 3502 / NCTC 13319 / Type A</strain>
    </source>
</reference>
<proteinExistence type="inferred from homology"/>
<keyword id="KW-0067">ATP-binding</keyword>
<keyword id="KW-0133">Cell shape</keyword>
<keyword id="KW-0961">Cell wall biogenesis/degradation</keyword>
<keyword id="KW-0963">Cytoplasm</keyword>
<keyword id="KW-0436">Ligase</keyword>
<keyword id="KW-0460">Magnesium</keyword>
<keyword id="KW-0464">Manganese</keyword>
<keyword id="KW-0479">Metal-binding</keyword>
<keyword id="KW-0547">Nucleotide-binding</keyword>
<keyword id="KW-0573">Peptidoglycan synthesis</keyword>
<keyword id="KW-1185">Reference proteome</keyword>
<sequence length="300" mass="33349">MKIGVIMGGISTEREVSLNSGREVIKYLELLEHEIIPIIIDKKEDVMEKAKGIDFAFLALHGKFGEDGTVQSVLQTLDIPYSGCGPLTSAICMDKDMTKKILKYANINTADWVNVSSVENIDYEAIEKIGYPVFVKPNSGGSSVATNLVKDKEGIKEAVELALKYDKEVMIENYTKGEEITCCMLNGKMLPVLAIRPHAEFFDYTAKYADGGSDEVVIELEENLHKKVEEMALACWKELKCEVYVRVDMIVKDGIPYVLELNTLPGMTKNSLFPKSANAVGISFAELLNSIVKYSLEVER</sequence>
<feature type="chain" id="PRO_1000030439" description="D-alanine--D-alanine ligase">
    <location>
        <begin position="1"/>
        <end position="300"/>
    </location>
</feature>
<feature type="domain" description="ATP-grasp" evidence="2">
    <location>
        <begin position="99"/>
        <end position="293"/>
    </location>
</feature>
<feature type="binding site" evidence="2">
    <location>
        <begin position="126"/>
        <end position="181"/>
    </location>
    <ligand>
        <name>ATP</name>
        <dbReference type="ChEBI" id="CHEBI:30616"/>
    </ligand>
</feature>
<feature type="binding site" evidence="2">
    <location>
        <position position="248"/>
    </location>
    <ligand>
        <name>Mg(2+)</name>
        <dbReference type="ChEBI" id="CHEBI:18420"/>
        <label>1</label>
    </ligand>
</feature>
<feature type="binding site" evidence="2">
    <location>
        <position position="260"/>
    </location>
    <ligand>
        <name>Mg(2+)</name>
        <dbReference type="ChEBI" id="CHEBI:18420"/>
        <label>1</label>
    </ligand>
</feature>
<feature type="binding site" evidence="2">
    <location>
        <position position="260"/>
    </location>
    <ligand>
        <name>Mg(2+)</name>
        <dbReference type="ChEBI" id="CHEBI:18420"/>
        <label>2</label>
    </ligand>
</feature>
<feature type="binding site" evidence="2">
    <location>
        <position position="262"/>
    </location>
    <ligand>
        <name>Mg(2+)</name>
        <dbReference type="ChEBI" id="CHEBI:18420"/>
        <label>2</label>
    </ligand>
</feature>